<reference key="1">
    <citation type="journal article" date="2000" name="Plant J.">
        <title>A member of a novel Arabidopsis thaliana gene family of candidate Mg2+ ion transporters complements a yeast mitochondrial group II intron-splicing mutant.</title>
        <authorList>
            <person name="Schock I."/>
            <person name="Gregan J."/>
            <person name="Steinhauser S."/>
            <person name="Schweyen R."/>
            <person name="Brennicke A."/>
            <person name="Knoop V."/>
        </authorList>
    </citation>
    <scope>NUCLEOTIDE SEQUENCE [MRNA] (ISOFORM 2)</scope>
    <scope>TISSUE SPECIFICITY</scope>
</reference>
<reference key="2">
    <citation type="journal article" date="2001" name="Plant Cell">
        <title>A novel family of magnesium transport genes in Arabidopsis.</title>
        <authorList>
            <person name="Li L."/>
            <person name="Tutone A.F."/>
            <person name="Drummond R.S."/>
            <person name="Gardner R.C."/>
            <person name="Luan S."/>
        </authorList>
    </citation>
    <scope>NUCLEOTIDE SEQUENCE [MRNA] (ISOFORM 1)</scope>
    <scope>GENE FAMILY</scope>
    <scope>TISSUE SPECIFICITY</scope>
    <source>
        <strain>cv. Landsberg erecta</strain>
    </source>
</reference>
<reference key="3">
    <citation type="journal article" date="1998" name="DNA Res.">
        <title>Structural analysis of Arabidopsis thaliana chromosome 5. IV. Sequence features of the regions of 1,456,315 bp covered by nineteen physically assigned P1 and TAC clones.</title>
        <authorList>
            <person name="Sato S."/>
            <person name="Kaneko T."/>
            <person name="Kotani H."/>
            <person name="Nakamura Y."/>
            <person name="Asamizu E."/>
            <person name="Miyajima N."/>
            <person name="Tabata S."/>
        </authorList>
    </citation>
    <scope>NUCLEOTIDE SEQUENCE [LARGE SCALE GENOMIC DNA]</scope>
    <source>
        <strain>cv. Columbia</strain>
    </source>
</reference>
<reference key="4">
    <citation type="journal article" date="2017" name="Plant J.">
        <title>Araport11: a complete reannotation of the Arabidopsis thaliana reference genome.</title>
        <authorList>
            <person name="Cheng C.Y."/>
            <person name="Krishnakumar V."/>
            <person name="Chan A.P."/>
            <person name="Thibaud-Nissen F."/>
            <person name="Schobel S."/>
            <person name="Town C.D."/>
        </authorList>
    </citation>
    <scope>GENOME REANNOTATION</scope>
    <source>
        <strain>cv. Columbia</strain>
    </source>
</reference>
<reference key="5">
    <citation type="journal article" date="2003" name="Science">
        <title>Empirical analysis of transcriptional activity in the Arabidopsis genome.</title>
        <authorList>
            <person name="Yamada K."/>
            <person name="Lim J."/>
            <person name="Dale J.M."/>
            <person name="Chen H."/>
            <person name="Shinn P."/>
            <person name="Palm C.J."/>
            <person name="Southwick A.M."/>
            <person name="Wu H.C."/>
            <person name="Kim C.J."/>
            <person name="Nguyen M."/>
            <person name="Pham P.K."/>
            <person name="Cheuk R.F."/>
            <person name="Karlin-Newmann G."/>
            <person name="Liu S.X."/>
            <person name="Lam B."/>
            <person name="Sakano H."/>
            <person name="Wu T."/>
            <person name="Yu G."/>
            <person name="Miranda M."/>
            <person name="Quach H.L."/>
            <person name="Tripp M."/>
            <person name="Chang C.H."/>
            <person name="Lee J.M."/>
            <person name="Toriumi M.J."/>
            <person name="Chan M.M."/>
            <person name="Tang C.C."/>
            <person name="Onodera C.S."/>
            <person name="Deng J.M."/>
            <person name="Akiyama K."/>
            <person name="Ansari Y."/>
            <person name="Arakawa T."/>
            <person name="Banh J."/>
            <person name="Banno F."/>
            <person name="Bowser L."/>
            <person name="Brooks S.Y."/>
            <person name="Carninci P."/>
            <person name="Chao Q."/>
            <person name="Choy N."/>
            <person name="Enju A."/>
            <person name="Goldsmith A.D."/>
            <person name="Gurjal M."/>
            <person name="Hansen N.F."/>
            <person name="Hayashizaki Y."/>
            <person name="Johnson-Hopson C."/>
            <person name="Hsuan V.W."/>
            <person name="Iida K."/>
            <person name="Karnes M."/>
            <person name="Khan S."/>
            <person name="Koesema E."/>
            <person name="Ishida J."/>
            <person name="Jiang P.X."/>
            <person name="Jones T."/>
            <person name="Kawai J."/>
            <person name="Kamiya A."/>
            <person name="Meyers C."/>
            <person name="Nakajima M."/>
            <person name="Narusaka M."/>
            <person name="Seki M."/>
            <person name="Sakurai T."/>
            <person name="Satou M."/>
            <person name="Tamse R."/>
            <person name="Vaysberg M."/>
            <person name="Wallender E.K."/>
            <person name="Wong C."/>
            <person name="Yamamura Y."/>
            <person name="Yuan S."/>
            <person name="Shinozaki K."/>
            <person name="Davis R.W."/>
            <person name="Theologis A."/>
            <person name="Ecker J.R."/>
        </authorList>
    </citation>
    <scope>NUCLEOTIDE SEQUENCE [LARGE SCALE MRNA] (ISOFORM 1)</scope>
    <source>
        <strain>cv. Columbia</strain>
    </source>
</reference>
<reference key="6">
    <citation type="submission" date="2002-03" db="EMBL/GenBank/DDBJ databases">
        <title>Full-length cDNA from Arabidopsis thaliana.</title>
        <authorList>
            <person name="Brover V.V."/>
            <person name="Troukhan M.E."/>
            <person name="Alexandrov N.A."/>
            <person name="Lu Y.-P."/>
            <person name="Flavell R.B."/>
            <person name="Feldmann K.A."/>
        </authorList>
    </citation>
    <scope>NUCLEOTIDE SEQUENCE [LARGE SCALE MRNA] (ISOFORM 1)</scope>
</reference>
<reference key="7">
    <citation type="journal article" date="2009" name="Cell Res.">
        <title>Magnesium transporter AtMGT9 is essential for pollen development in Arabidopsis.</title>
        <authorList>
            <person name="Chen J."/>
            <person name="Li L.G."/>
            <person name="Liu Z.H."/>
            <person name="Yuan Y.J."/>
            <person name="Guo L.L."/>
            <person name="Mao D.D."/>
            <person name="Tian L.F."/>
            <person name="Chen L.B."/>
            <person name="Luan S."/>
            <person name="Li D.P."/>
        </authorList>
    </citation>
    <scope>FUNCTION</scope>
    <scope>TISSUE SPECIFICITY</scope>
</reference>
<reference key="8">
    <citation type="journal article" date="2009" name="Plant Cell">
        <title>A root-expressed magnesium transporter of the MRS2/MGT gene family in Arabidopsis thaliana allows for growth in low-Mg2+ environments.</title>
        <authorList>
            <person name="Gebert M."/>
            <person name="Meschenmoser K."/>
            <person name="Svidova S."/>
            <person name="Weghuber J."/>
            <person name="Schweyen R."/>
            <person name="Eifler K."/>
            <person name="Lenz H."/>
            <person name="Weyand K."/>
            <person name="Knoop V."/>
        </authorList>
    </citation>
    <scope>GENE FAMILY</scope>
    <scope>NOMENCLATURE</scope>
    <scope>TISSUE SPECIFICITY</scope>
</reference>
<organism>
    <name type="scientific">Arabidopsis thaliana</name>
    <name type="common">Mouse-ear cress</name>
    <dbReference type="NCBI Taxonomy" id="3702"/>
    <lineage>
        <taxon>Eukaryota</taxon>
        <taxon>Viridiplantae</taxon>
        <taxon>Streptophyta</taxon>
        <taxon>Embryophyta</taxon>
        <taxon>Tracheophyta</taxon>
        <taxon>Spermatophyta</taxon>
        <taxon>Magnoliopsida</taxon>
        <taxon>eudicotyledons</taxon>
        <taxon>Gunneridae</taxon>
        <taxon>Pentapetalae</taxon>
        <taxon>rosids</taxon>
        <taxon>malvids</taxon>
        <taxon>Brassicales</taxon>
        <taxon>Brassicaceae</taxon>
        <taxon>Camelineae</taxon>
        <taxon>Arabidopsis</taxon>
    </lineage>
</organism>
<keyword id="KW-0025">Alternative splicing</keyword>
<keyword id="KW-0406">Ion transport</keyword>
<keyword id="KW-0460">Magnesium</keyword>
<keyword id="KW-0472">Membrane</keyword>
<keyword id="KW-1185">Reference proteome</keyword>
<keyword id="KW-0812">Transmembrane</keyword>
<keyword id="KW-1133">Transmembrane helix</keyword>
<keyword id="KW-0813">Transport</keyword>
<name>MRS22_ARATH</name>
<evidence type="ECO:0000250" key="1"/>
<evidence type="ECO:0000255" key="2"/>
<evidence type="ECO:0000256" key="3">
    <source>
        <dbReference type="SAM" id="MobiDB-lite"/>
    </source>
</evidence>
<evidence type="ECO:0000269" key="4">
    <source>
    </source>
</evidence>
<evidence type="ECO:0000269" key="5">
    <source>
    </source>
</evidence>
<evidence type="ECO:0000269" key="6">
    <source>
    </source>
</evidence>
<evidence type="ECO:0000269" key="7">
    <source>
    </source>
</evidence>
<evidence type="ECO:0000303" key="8">
    <source>
    </source>
</evidence>
<evidence type="ECO:0000305" key="9"/>
<comment type="function">
    <text evidence="6">Low-affinity magnesium transporter that mediates the influx of magnesium. Plays a crucial role in male gametophyte development and male fertility.</text>
</comment>
<comment type="subcellular location">
    <subcellularLocation>
        <location evidence="1">Membrane</location>
        <topology evidence="1">Multi-pass membrane protein</topology>
    </subcellularLocation>
</comment>
<comment type="alternative products">
    <event type="alternative splicing"/>
    <isoform>
        <id>Q9FLG2-1</id>
        <name>1</name>
        <sequence type="displayed"/>
    </isoform>
    <isoform>
        <id>Q9FLG2-2</id>
        <name>2</name>
        <sequence type="described" ref="VSP_039190 VSP_039191"/>
    </isoform>
</comment>
<comment type="tissue specificity">
    <text evidence="4 5 6 7">Expressed in the whole plant but preferentially in the mature anthers.</text>
</comment>
<comment type="miscellaneous">
    <text>Has the ability to complement mutants in Salmonella enterica and yeast lacking magnesium transport capability.</text>
</comment>
<comment type="miscellaneous">
    <molecule>Isoform 2</molecule>
    <text evidence="9">May be due to an intron retention.</text>
</comment>
<comment type="similarity">
    <text evidence="9">Belongs to the CorA metal ion transporter (MIT) (TC 1.A.35.5) family.</text>
</comment>
<proteinExistence type="evidence at transcript level"/>
<accession>Q9FLG2</accession>
<accession>Q9FT79</accession>
<protein>
    <recommendedName>
        <fullName>Magnesium transporter MRS2-2</fullName>
    </recommendedName>
    <alternativeName>
        <fullName>Magnesium Transporter 9</fullName>
        <shortName>AtMGT9</shortName>
    </alternativeName>
</protein>
<dbReference type="EMBL" id="AJ297817">
    <property type="protein sequence ID" value="CAC13982.1"/>
    <property type="molecule type" value="mRNA"/>
</dbReference>
<dbReference type="EMBL" id="AY150287">
    <property type="protein sequence ID" value="AAN73212.1"/>
    <property type="molecule type" value="mRNA"/>
</dbReference>
<dbReference type="EMBL" id="AB010076">
    <property type="protein sequence ID" value="BAB11423.1"/>
    <property type="molecule type" value="Genomic_DNA"/>
</dbReference>
<dbReference type="EMBL" id="CP002688">
    <property type="protein sequence ID" value="AED97920.1"/>
    <property type="molecule type" value="Genomic_DNA"/>
</dbReference>
<dbReference type="EMBL" id="CP002688">
    <property type="protein sequence ID" value="AED97921.1"/>
    <property type="molecule type" value="Genomic_DNA"/>
</dbReference>
<dbReference type="EMBL" id="AY065449">
    <property type="protein sequence ID" value="AAL38890.1"/>
    <property type="molecule type" value="mRNA"/>
</dbReference>
<dbReference type="EMBL" id="AY096449">
    <property type="protein sequence ID" value="AAM20089.1"/>
    <property type="molecule type" value="mRNA"/>
</dbReference>
<dbReference type="EMBL" id="AY084382">
    <property type="protein sequence ID" value="AAM60960.1"/>
    <property type="molecule type" value="mRNA"/>
</dbReference>
<dbReference type="RefSeq" id="NP_201261.2">
    <molecule id="Q9FLG2-2"/>
    <property type="nucleotide sequence ID" value="NM_125852.2"/>
</dbReference>
<dbReference type="RefSeq" id="NP_851269.1">
    <molecule id="Q9FLG2-1"/>
    <property type="nucleotide sequence ID" value="NM_180938.3"/>
</dbReference>
<dbReference type="SMR" id="Q9FLG2"/>
<dbReference type="BioGRID" id="21819">
    <property type="interactions" value="28"/>
</dbReference>
<dbReference type="FunCoup" id="Q9FLG2">
    <property type="interactions" value="533"/>
</dbReference>
<dbReference type="IntAct" id="Q9FLG2">
    <property type="interactions" value="28"/>
</dbReference>
<dbReference type="STRING" id="3702.Q9FLG2"/>
<dbReference type="iPTMnet" id="Q9FLG2"/>
<dbReference type="PaxDb" id="3702-AT5G64560.1"/>
<dbReference type="ProteomicsDB" id="238909">
    <molecule id="Q9FLG2-1"/>
</dbReference>
<dbReference type="EnsemblPlants" id="AT5G64560.1">
    <molecule id="Q9FLG2-1"/>
    <property type="protein sequence ID" value="AT5G64560.1"/>
    <property type="gene ID" value="AT5G64560"/>
</dbReference>
<dbReference type="EnsemblPlants" id="AT5G64560.2">
    <molecule id="Q9FLG2-2"/>
    <property type="protein sequence ID" value="AT5G64560.2"/>
    <property type="gene ID" value="AT5G64560"/>
</dbReference>
<dbReference type="GeneID" id="836577"/>
<dbReference type="Gramene" id="AT5G64560.1">
    <molecule id="Q9FLG2-1"/>
    <property type="protein sequence ID" value="AT5G64560.1"/>
    <property type="gene ID" value="AT5G64560"/>
</dbReference>
<dbReference type="Gramene" id="AT5G64560.2">
    <molecule id="Q9FLG2-2"/>
    <property type="protein sequence ID" value="AT5G64560.2"/>
    <property type="gene ID" value="AT5G64560"/>
</dbReference>
<dbReference type="KEGG" id="ath:AT5G64560"/>
<dbReference type="Araport" id="AT5G64560"/>
<dbReference type="TAIR" id="AT5G64560">
    <property type="gene designation" value="MGT9"/>
</dbReference>
<dbReference type="eggNOG" id="KOG2662">
    <property type="taxonomic scope" value="Eukaryota"/>
</dbReference>
<dbReference type="InParanoid" id="Q9FLG2"/>
<dbReference type="OMA" id="FKQKGVM"/>
<dbReference type="OrthoDB" id="10251508at2759"/>
<dbReference type="PhylomeDB" id="Q9FLG2"/>
<dbReference type="PRO" id="PR:Q9FLG2"/>
<dbReference type="Proteomes" id="UP000006548">
    <property type="component" value="Chromosome 5"/>
</dbReference>
<dbReference type="ExpressionAtlas" id="Q9FLG2">
    <property type="expression patterns" value="baseline and differential"/>
</dbReference>
<dbReference type="GO" id="GO:0005886">
    <property type="term" value="C:plasma membrane"/>
    <property type="evidence" value="ECO:0000314"/>
    <property type="project" value="TAIR"/>
</dbReference>
<dbReference type="GO" id="GO:0015095">
    <property type="term" value="F:magnesium ion transmembrane transporter activity"/>
    <property type="evidence" value="ECO:0000314"/>
    <property type="project" value="TAIR"/>
</dbReference>
<dbReference type="GO" id="GO:0009555">
    <property type="term" value="P:pollen development"/>
    <property type="evidence" value="ECO:0000315"/>
    <property type="project" value="TAIR"/>
</dbReference>
<dbReference type="CDD" id="cd12823">
    <property type="entry name" value="Mrs2_Mfm1p-like"/>
    <property type="match status" value="1"/>
</dbReference>
<dbReference type="FunFam" id="2.40.128.330:FF:000001">
    <property type="entry name" value="Magnesium transporter MRS2-1"/>
    <property type="match status" value="1"/>
</dbReference>
<dbReference type="Gene3D" id="2.40.128.330">
    <property type="match status" value="1"/>
</dbReference>
<dbReference type="Gene3D" id="1.20.58.340">
    <property type="entry name" value="Magnesium transport protein CorA, transmembrane region"/>
    <property type="match status" value="1"/>
</dbReference>
<dbReference type="InterPro" id="IPR045863">
    <property type="entry name" value="CorA_TM1_TM2"/>
</dbReference>
<dbReference type="InterPro" id="IPR002523">
    <property type="entry name" value="MgTranspt_CorA/ZnTranspt_ZntB"/>
</dbReference>
<dbReference type="InterPro" id="IPR039204">
    <property type="entry name" value="MRS2-like"/>
</dbReference>
<dbReference type="PANTHER" id="PTHR13890:SF31">
    <property type="entry name" value="MAGNESIUM TRANSPORTER MRS2-2-RELATED"/>
    <property type="match status" value="1"/>
</dbReference>
<dbReference type="PANTHER" id="PTHR13890">
    <property type="entry name" value="RNA SPLICING PROTEIN MRS2, MITOCHONDRIAL"/>
    <property type="match status" value="1"/>
</dbReference>
<dbReference type="Pfam" id="PF01544">
    <property type="entry name" value="CorA"/>
    <property type="match status" value="1"/>
</dbReference>
<dbReference type="Pfam" id="PF22099">
    <property type="entry name" value="MRS2-like"/>
    <property type="match status" value="1"/>
</dbReference>
<dbReference type="SUPFAM" id="SSF144083">
    <property type="entry name" value="Magnesium transport protein CorA, transmembrane region"/>
    <property type="match status" value="1"/>
</dbReference>
<feature type="chain" id="PRO_0000394166" description="Magnesium transporter MRS2-2">
    <location>
        <begin position="1"/>
        <end position="394"/>
    </location>
</feature>
<feature type="transmembrane region" description="Helical" evidence="2">
    <location>
        <begin position="329"/>
        <end position="349"/>
    </location>
</feature>
<feature type="transmembrane region" description="Helical" evidence="2">
    <location>
        <begin position="366"/>
        <end position="386"/>
    </location>
</feature>
<feature type="region of interest" description="Disordered" evidence="3">
    <location>
        <begin position="115"/>
        <end position="145"/>
    </location>
</feature>
<feature type="short sequence motif" description="Required for magnesium transport activity">
    <location>
        <begin position="349"/>
        <end position="351"/>
    </location>
</feature>
<feature type="splice variant" id="VSP_039190" description="In isoform 2." evidence="8">
    <original>VGLTGTLCVVV</original>
    <variation>RNQNSIRMRMK</variation>
    <location>
        <begin position="368"/>
        <end position="378"/>
    </location>
</feature>
<feature type="splice variant" id="VSP_039191" description="In isoform 2." evidence="8">
    <location>
        <begin position="379"/>
        <end position="394"/>
    </location>
</feature>
<sequence>MAQNGYLVPADPSAVVTVKKKTPQASWALIDATGQSEPLDVDKYEIMHRVQIHARDLRILDPNLSYPSTILGRERAIVLNLEHIKAIITSEEVLLRDPSDENVIPVVEELRRRLPVGNASHNGGQGDGKEIAGAQNDGDTGDEDESPFEFRALEVALEAICSFLAARTAELETAAYPALDELTSKISSRNLDRVRKLKSAMTRLTARVQKVRDELEQLLDDDDDMADLYLSRKLSSASSPISSIGEPNWYTTSPTIGSKISRASRASLATVHGDENDVEELEMLLEAYFMQIDSTLNRLTTLREYIDDTEDYINIQLDNHRNQLIQLELVLSSGTVCLSMYSLVAGIFGMNIPYTWNDGHGYMFKYVVGLTGTLCVVVFVIIMSYARYKGLVGS</sequence>
<gene>
    <name type="primary">MRS2-2</name>
    <name type="synonym">MGT9</name>
    <name type="ordered locus">At5g64560</name>
    <name type="ORF">MUB3.8</name>
</gene>